<evidence type="ECO:0000255" key="1"/>
<evidence type="ECO:0000255" key="2">
    <source>
        <dbReference type="PROSITE-ProRule" id="PRU00361"/>
    </source>
</evidence>
<evidence type="ECO:0000256" key="3">
    <source>
        <dbReference type="SAM" id="MobiDB-lite"/>
    </source>
</evidence>
<evidence type="ECO:0000269" key="4">
    <source>
    </source>
</evidence>
<evidence type="ECO:0000303" key="5">
    <source>
    </source>
</evidence>
<evidence type="ECO:0000305" key="6"/>
<gene>
    <name type="primary">BIN3</name>
</gene>
<organism>
    <name type="scientific">Homo sapiens</name>
    <name type="common">Human</name>
    <dbReference type="NCBI Taxonomy" id="9606"/>
    <lineage>
        <taxon>Eukaryota</taxon>
        <taxon>Metazoa</taxon>
        <taxon>Chordata</taxon>
        <taxon>Craniata</taxon>
        <taxon>Vertebrata</taxon>
        <taxon>Euteleostomi</taxon>
        <taxon>Mammalia</taxon>
        <taxon>Eutheria</taxon>
        <taxon>Euarchontoglires</taxon>
        <taxon>Primates</taxon>
        <taxon>Haplorrhini</taxon>
        <taxon>Catarrhini</taxon>
        <taxon>Hominidae</taxon>
        <taxon>Homo</taxon>
    </lineage>
</organism>
<name>BIN3_HUMAN</name>
<reference key="1">
    <citation type="journal article" date="2001" name="J. Biol. Chem.">
        <title>Human BIN3 complements the F-actin localization defects caused by loss of Hob3p, the fission yeast homolog of Rvs161p.</title>
        <authorList>
            <person name="Routhier E.L."/>
            <person name="Burn T.C."/>
            <person name="Abbaszade I."/>
            <person name="Summers M."/>
            <person name="Albright C.F."/>
            <person name="Prendergast G.C."/>
        </authorList>
    </citation>
    <scope>NUCLEOTIDE SEQUENCE [MRNA] (ISOFORM 1)</scope>
    <scope>TISSUE SPECIFICITY</scope>
</reference>
<reference key="2">
    <citation type="journal article" date="2004" name="Nat. Genet.">
        <title>Complete sequencing and characterization of 21,243 full-length human cDNAs.</title>
        <authorList>
            <person name="Ota T."/>
            <person name="Suzuki Y."/>
            <person name="Nishikawa T."/>
            <person name="Otsuki T."/>
            <person name="Sugiyama T."/>
            <person name="Irie R."/>
            <person name="Wakamatsu A."/>
            <person name="Hayashi K."/>
            <person name="Sato H."/>
            <person name="Nagai K."/>
            <person name="Kimura K."/>
            <person name="Makita H."/>
            <person name="Sekine M."/>
            <person name="Obayashi M."/>
            <person name="Nishi T."/>
            <person name="Shibahara T."/>
            <person name="Tanaka T."/>
            <person name="Ishii S."/>
            <person name="Yamamoto J."/>
            <person name="Saito K."/>
            <person name="Kawai Y."/>
            <person name="Isono Y."/>
            <person name="Nakamura Y."/>
            <person name="Nagahari K."/>
            <person name="Murakami K."/>
            <person name="Yasuda T."/>
            <person name="Iwayanagi T."/>
            <person name="Wagatsuma M."/>
            <person name="Shiratori A."/>
            <person name="Sudo H."/>
            <person name="Hosoiri T."/>
            <person name="Kaku Y."/>
            <person name="Kodaira H."/>
            <person name="Kondo H."/>
            <person name="Sugawara M."/>
            <person name="Takahashi M."/>
            <person name="Kanda K."/>
            <person name="Yokoi T."/>
            <person name="Furuya T."/>
            <person name="Kikkawa E."/>
            <person name="Omura Y."/>
            <person name="Abe K."/>
            <person name="Kamihara K."/>
            <person name="Katsuta N."/>
            <person name="Sato K."/>
            <person name="Tanikawa M."/>
            <person name="Yamazaki M."/>
            <person name="Ninomiya K."/>
            <person name="Ishibashi T."/>
            <person name="Yamashita H."/>
            <person name="Murakawa K."/>
            <person name="Fujimori K."/>
            <person name="Tanai H."/>
            <person name="Kimata M."/>
            <person name="Watanabe M."/>
            <person name="Hiraoka S."/>
            <person name="Chiba Y."/>
            <person name="Ishida S."/>
            <person name="Ono Y."/>
            <person name="Takiguchi S."/>
            <person name="Watanabe S."/>
            <person name="Yosida M."/>
            <person name="Hotuta T."/>
            <person name="Kusano J."/>
            <person name="Kanehori K."/>
            <person name="Takahashi-Fujii A."/>
            <person name="Hara H."/>
            <person name="Tanase T.-O."/>
            <person name="Nomura Y."/>
            <person name="Togiya S."/>
            <person name="Komai F."/>
            <person name="Hara R."/>
            <person name="Takeuchi K."/>
            <person name="Arita M."/>
            <person name="Imose N."/>
            <person name="Musashino K."/>
            <person name="Yuuki H."/>
            <person name="Oshima A."/>
            <person name="Sasaki N."/>
            <person name="Aotsuka S."/>
            <person name="Yoshikawa Y."/>
            <person name="Matsunawa H."/>
            <person name="Ichihara T."/>
            <person name="Shiohata N."/>
            <person name="Sano S."/>
            <person name="Moriya S."/>
            <person name="Momiyama H."/>
            <person name="Satoh N."/>
            <person name="Takami S."/>
            <person name="Terashima Y."/>
            <person name="Suzuki O."/>
            <person name="Nakagawa S."/>
            <person name="Senoh A."/>
            <person name="Mizoguchi H."/>
            <person name="Goto Y."/>
            <person name="Shimizu F."/>
            <person name="Wakebe H."/>
            <person name="Hishigaki H."/>
            <person name="Watanabe T."/>
            <person name="Sugiyama A."/>
            <person name="Takemoto M."/>
            <person name="Kawakami B."/>
            <person name="Yamazaki M."/>
            <person name="Watanabe K."/>
            <person name="Kumagai A."/>
            <person name="Itakura S."/>
            <person name="Fukuzumi Y."/>
            <person name="Fujimori Y."/>
            <person name="Komiyama M."/>
            <person name="Tashiro H."/>
            <person name="Tanigami A."/>
            <person name="Fujiwara T."/>
            <person name="Ono T."/>
            <person name="Yamada K."/>
            <person name="Fujii Y."/>
            <person name="Ozaki K."/>
            <person name="Hirao M."/>
            <person name="Ohmori Y."/>
            <person name="Kawabata A."/>
            <person name="Hikiji T."/>
            <person name="Kobatake N."/>
            <person name="Inagaki H."/>
            <person name="Ikema Y."/>
            <person name="Okamoto S."/>
            <person name="Okitani R."/>
            <person name="Kawakami T."/>
            <person name="Noguchi S."/>
            <person name="Itoh T."/>
            <person name="Shigeta K."/>
            <person name="Senba T."/>
            <person name="Matsumura K."/>
            <person name="Nakajima Y."/>
            <person name="Mizuno T."/>
            <person name="Morinaga M."/>
            <person name="Sasaki M."/>
            <person name="Togashi T."/>
            <person name="Oyama M."/>
            <person name="Hata H."/>
            <person name="Watanabe M."/>
            <person name="Komatsu T."/>
            <person name="Mizushima-Sugano J."/>
            <person name="Satoh T."/>
            <person name="Shirai Y."/>
            <person name="Takahashi Y."/>
            <person name="Nakagawa K."/>
            <person name="Okumura K."/>
            <person name="Nagase T."/>
            <person name="Nomura N."/>
            <person name="Kikuchi H."/>
            <person name="Masuho Y."/>
            <person name="Yamashita R."/>
            <person name="Nakai K."/>
            <person name="Yada T."/>
            <person name="Nakamura Y."/>
            <person name="Ohara O."/>
            <person name="Isogai T."/>
            <person name="Sugano S."/>
        </authorList>
    </citation>
    <scope>NUCLEOTIDE SEQUENCE [LARGE SCALE MRNA] (ISOFORMS 1 AND 2)</scope>
</reference>
<reference key="3">
    <citation type="journal article" date="2004" name="Genome Res.">
        <title>The status, quality, and expansion of the NIH full-length cDNA project: the Mammalian Gene Collection (MGC).</title>
        <authorList>
            <consortium name="The MGC Project Team"/>
        </authorList>
    </citation>
    <scope>NUCLEOTIDE SEQUENCE [LARGE SCALE MRNA] (ISOFORM 1)</scope>
    <source>
        <tissue>Lung</tissue>
        <tissue>Skin</tissue>
    </source>
</reference>
<reference key="4">
    <citation type="journal article" date="2008" name="Proc. Natl. Acad. Sci. U.S.A.">
        <title>A quantitative atlas of mitotic phosphorylation.</title>
        <authorList>
            <person name="Dephoure N."/>
            <person name="Zhou C."/>
            <person name="Villen J."/>
            <person name="Beausoleil S.A."/>
            <person name="Bakalarski C.E."/>
            <person name="Elledge S.J."/>
            <person name="Gygi S.P."/>
        </authorList>
    </citation>
    <scope>IDENTIFICATION BY MASS SPECTROMETRY [LARGE SCALE ANALYSIS]</scope>
    <source>
        <tissue>Cervix carcinoma</tissue>
    </source>
</reference>
<reference key="5">
    <citation type="journal article" date="2011" name="BMC Syst. Biol.">
        <title>Initial characterization of the human central proteome.</title>
        <authorList>
            <person name="Burkard T.R."/>
            <person name="Planyavsky M."/>
            <person name="Kaupe I."/>
            <person name="Breitwieser F.P."/>
            <person name="Buerckstuemmer T."/>
            <person name="Bennett K.L."/>
            <person name="Superti-Furga G."/>
            <person name="Colinge J."/>
        </authorList>
    </citation>
    <scope>IDENTIFICATION BY MASS SPECTROMETRY [LARGE SCALE ANALYSIS]</scope>
</reference>
<protein>
    <recommendedName>
        <fullName>Bridging integrator 3</fullName>
    </recommendedName>
</protein>
<feature type="chain" id="PRO_0000192955" description="Bridging integrator 3">
    <location>
        <begin position="1"/>
        <end position="253"/>
    </location>
</feature>
<feature type="domain" description="BAR" evidence="2">
    <location>
        <begin position="9"/>
        <end position="232"/>
    </location>
</feature>
<feature type="region of interest" description="Disordered" evidence="3">
    <location>
        <begin position="220"/>
        <end position="240"/>
    </location>
</feature>
<feature type="coiled-coil region" evidence="1">
    <location>
        <begin position="18"/>
        <end position="51"/>
    </location>
</feature>
<feature type="coiled-coil region" evidence="1">
    <location>
        <begin position="120"/>
        <end position="152"/>
    </location>
</feature>
<feature type="coiled-coil region" evidence="1">
    <location>
        <begin position="231"/>
        <end position="247"/>
    </location>
</feature>
<feature type="compositionally biased region" description="Basic and acidic residues" evidence="3">
    <location>
        <begin position="227"/>
        <end position="240"/>
    </location>
</feature>
<feature type="splice variant" id="VSP_013465" description="In isoform 2." evidence="5">
    <location>
        <begin position="1"/>
        <end position="54"/>
    </location>
</feature>
<feature type="sequence conflict" description="In Ref. 2; BAA91603." evidence="6" ref="2">
    <original>N</original>
    <variation>I</variation>
    <location>
        <position position="122"/>
    </location>
</feature>
<proteinExistence type="evidence at protein level"/>
<keyword id="KW-0025">Alternative splicing</keyword>
<keyword id="KW-0131">Cell cycle</keyword>
<keyword id="KW-0132">Cell division</keyword>
<keyword id="KW-0175">Coiled coil</keyword>
<keyword id="KW-0963">Cytoplasm</keyword>
<keyword id="KW-0206">Cytoskeleton</keyword>
<keyword id="KW-1267">Proteomics identification</keyword>
<keyword id="KW-1185">Reference proteome</keyword>
<keyword id="KW-0717">Septation</keyword>
<accession>Q9NQY0</accession>
<accession>Q9BVG2</accession>
<accession>Q9NVY9</accession>
<dbReference type="EMBL" id="AF271732">
    <property type="protein sequence ID" value="AAF76218.1"/>
    <property type="molecule type" value="mRNA"/>
</dbReference>
<dbReference type="EMBL" id="AK001289">
    <property type="protein sequence ID" value="BAA91603.1"/>
    <property type="molecule type" value="mRNA"/>
</dbReference>
<dbReference type="EMBL" id="AK023980">
    <property type="protein sequence ID" value="BAB14751.1"/>
    <property type="molecule type" value="mRNA"/>
</dbReference>
<dbReference type="EMBL" id="BC001223">
    <property type="protein sequence ID" value="AAH01223.1"/>
    <property type="status" value="ALT_INIT"/>
    <property type="molecule type" value="mRNA"/>
</dbReference>
<dbReference type="EMBL" id="BC009824">
    <property type="protein sequence ID" value="AAH09824.1"/>
    <property type="molecule type" value="mRNA"/>
</dbReference>
<dbReference type="CCDS" id="CCDS47825.1">
    <molecule id="Q9NQY0-1"/>
</dbReference>
<dbReference type="RefSeq" id="NP_061158.1">
    <molecule id="Q9NQY0-1"/>
    <property type="nucleotide sequence ID" value="NM_018688.6"/>
</dbReference>
<dbReference type="RefSeq" id="XP_011542888.1">
    <property type="nucleotide sequence ID" value="XM_011544586.2"/>
</dbReference>
<dbReference type="RefSeq" id="XP_047277951.1">
    <molecule id="Q9NQY0-2"/>
    <property type="nucleotide sequence ID" value="XM_047421995.1"/>
</dbReference>
<dbReference type="RefSeq" id="XP_054216818.1">
    <molecule id="Q9NQY0-2"/>
    <property type="nucleotide sequence ID" value="XM_054360843.1"/>
</dbReference>
<dbReference type="SMR" id="Q9NQY0"/>
<dbReference type="BioGRID" id="120995">
    <property type="interactions" value="46"/>
</dbReference>
<dbReference type="FunCoup" id="Q9NQY0">
    <property type="interactions" value="811"/>
</dbReference>
<dbReference type="IntAct" id="Q9NQY0">
    <property type="interactions" value="40"/>
</dbReference>
<dbReference type="MINT" id="Q9NQY0"/>
<dbReference type="STRING" id="9606.ENSP00000276416"/>
<dbReference type="ChEMBL" id="CHEMBL4295959"/>
<dbReference type="GlyGen" id="Q9NQY0">
    <property type="glycosylation" value="1 site, 1 O-linked glycan (1 site)"/>
</dbReference>
<dbReference type="iPTMnet" id="Q9NQY0"/>
<dbReference type="PhosphoSitePlus" id="Q9NQY0"/>
<dbReference type="BioMuta" id="BIN3"/>
<dbReference type="DMDM" id="30912742"/>
<dbReference type="jPOST" id="Q9NQY0"/>
<dbReference type="MassIVE" id="Q9NQY0"/>
<dbReference type="PaxDb" id="9606-ENSP00000276416"/>
<dbReference type="PeptideAtlas" id="Q9NQY0"/>
<dbReference type="ProteomicsDB" id="82229">
    <molecule id="Q9NQY0-1"/>
</dbReference>
<dbReference type="ProteomicsDB" id="82230">
    <molecule id="Q9NQY0-2"/>
</dbReference>
<dbReference type="Pumba" id="Q9NQY0"/>
<dbReference type="Antibodypedia" id="5285">
    <property type="antibodies" value="357 antibodies from 26 providers"/>
</dbReference>
<dbReference type="DNASU" id="55909"/>
<dbReference type="Ensembl" id="ENST00000276416.11">
    <molecule id="Q9NQY0-1"/>
    <property type="protein sequence ID" value="ENSP00000276416.6"/>
    <property type="gene ID" value="ENSG00000147439.14"/>
</dbReference>
<dbReference type="Ensembl" id="ENST00000519513.5">
    <molecule id="Q9NQY0-2"/>
    <property type="protein sequence ID" value="ENSP00000430423.1"/>
    <property type="gene ID" value="ENSG00000147439.14"/>
</dbReference>
<dbReference type="GeneID" id="55909"/>
<dbReference type="KEGG" id="hsa:55909"/>
<dbReference type="MANE-Select" id="ENST00000276416.11">
    <property type="protein sequence ID" value="ENSP00000276416.6"/>
    <property type="RefSeq nucleotide sequence ID" value="NM_018688.6"/>
    <property type="RefSeq protein sequence ID" value="NP_061158.1"/>
</dbReference>
<dbReference type="UCSC" id="uc003xcl.5">
    <molecule id="Q9NQY0-1"/>
    <property type="organism name" value="human"/>
</dbReference>
<dbReference type="AGR" id="HGNC:1054"/>
<dbReference type="CTD" id="55909"/>
<dbReference type="DisGeNET" id="55909"/>
<dbReference type="GeneCards" id="BIN3"/>
<dbReference type="HGNC" id="HGNC:1054">
    <property type="gene designation" value="BIN3"/>
</dbReference>
<dbReference type="HPA" id="ENSG00000147439">
    <property type="expression patterns" value="Low tissue specificity"/>
</dbReference>
<dbReference type="MIM" id="606396">
    <property type="type" value="gene"/>
</dbReference>
<dbReference type="neXtProt" id="NX_Q9NQY0"/>
<dbReference type="OpenTargets" id="ENSG00000147439"/>
<dbReference type="PharmGKB" id="PA25357"/>
<dbReference type="VEuPathDB" id="HostDB:ENSG00000147439"/>
<dbReference type="eggNOG" id="KOG3771">
    <property type="taxonomic scope" value="Eukaryota"/>
</dbReference>
<dbReference type="GeneTree" id="ENSGT00950000182882"/>
<dbReference type="HOGENOM" id="CLU_090113_1_0_1"/>
<dbReference type="InParanoid" id="Q9NQY0"/>
<dbReference type="OMA" id="TRFCAYF"/>
<dbReference type="OrthoDB" id="446293at2759"/>
<dbReference type="PAN-GO" id="Q9NQY0">
    <property type="GO annotations" value="5 GO annotations based on evolutionary models"/>
</dbReference>
<dbReference type="PhylomeDB" id="Q9NQY0"/>
<dbReference type="TreeFam" id="TF331711"/>
<dbReference type="PathwayCommons" id="Q9NQY0"/>
<dbReference type="SignaLink" id="Q9NQY0"/>
<dbReference type="BioGRID-ORCS" id="55909">
    <property type="hits" value="13 hits in 1162 CRISPR screens"/>
</dbReference>
<dbReference type="ChiTaRS" id="BIN3">
    <property type="organism name" value="human"/>
</dbReference>
<dbReference type="GeneWiki" id="BIN3"/>
<dbReference type="GenomeRNAi" id="55909"/>
<dbReference type="Pharos" id="Q9NQY0">
    <property type="development level" value="Tbio"/>
</dbReference>
<dbReference type="PRO" id="PR:Q9NQY0"/>
<dbReference type="Proteomes" id="UP000005640">
    <property type="component" value="Chromosome 8"/>
</dbReference>
<dbReference type="RNAct" id="Q9NQY0">
    <property type="molecule type" value="protein"/>
</dbReference>
<dbReference type="Bgee" id="ENSG00000147439">
    <property type="expression patterns" value="Expressed in sural nerve and 180 other cell types or tissues"/>
</dbReference>
<dbReference type="ExpressionAtlas" id="Q9NQY0">
    <property type="expression patterns" value="baseline and differential"/>
</dbReference>
<dbReference type="GO" id="GO:0015629">
    <property type="term" value="C:actin cytoskeleton"/>
    <property type="evidence" value="ECO:0000318"/>
    <property type="project" value="GO_Central"/>
</dbReference>
<dbReference type="GO" id="GO:0005737">
    <property type="term" value="C:cytoplasm"/>
    <property type="evidence" value="ECO:0007669"/>
    <property type="project" value="UniProtKB-KW"/>
</dbReference>
<dbReference type="GO" id="GO:0008093">
    <property type="term" value="F:cytoskeletal anchor activity"/>
    <property type="evidence" value="ECO:0000303"/>
    <property type="project" value="UniProtKB"/>
</dbReference>
<dbReference type="GO" id="GO:0051666">
    <property type="term" value="P:actin cortical patch localization"/>
    <property type="evidence" value="ECO:0000318"/>
    <property type="project" value="GO_Central"/>
</dbReference>
<dbReference type="GO" id="GO:0007015">
    <property type="term" value="P:actin filament organization"/>
    <property type="evidence" value="ECO:0000303"/>
    <property type="project" value="UniProtKB"/>
</dbReference>
<dbReference type="GO" id="GO:0061640">
    <property type="term" value="P:cytoskeleton-dependent cytokinesis"/>
    <property type="evidence" value="ECO:0000303"/>
    <property type="project" value="UniProtKB"/>
</dbReference>
<dbReference type="GO" id="GO:0006897">
    <property type="term" value="P:endocytosis"/>
    <property type="evidence" value="ECO:0000318"/>
    <property type="project" value="GO_Central"/>
</dbReference>
<dbReference type="GO" id="GO:0014839">
    <property type="term" value="P:myoblast migration involved in skeletal muscle regeneration"/>
    <property type="evidence" value="ECO:0007669"/>
    <property type="project" value="Ensembl"/>
</dbReference>
<dbReference type="GO" id="GO:0097320">
    <property type="term" value="P:plasma membrane tubulation"/>
    <property type="evidence" value="ECO:0000318"/>
    <property type="project" value="GO_Central"/>
</dbReference>
<dbReference type="GO" id="GO:0008104">
    <property type="term" value="P:protein localization"/>
    <property type="evidence" value="ECO:0000315"/>
    <property type="project" value="UniProtKB"/>
</dbReference>
<dbReference type="GO" id="GO:0010591">
    <property type="term" value="P:regulation of lamellipodium assembly"/>
    <property type="evidence" value="ECO:0007669"/>
    <property type="project" value="Ensembl"/>
</dbReference>
<dbReference type="GO" id="GO:0048741">
    <property type="term" value="P:skeletal muscle fiber development"/>
    <property type="evidence" value="ECO:0007669"/>
    <property type="project" value="Ensembl"/>
</dbReference>
<dbReference type="GO" id="GO:0009826">
    <property type="term" value="P:unidimensional cell growth"/>
    <property type="evidence" value="ECO:0000315"/>
    <property type="project" value="UniProtKB"/>
</dbReference>
<dbReference type="CDD" id="cd07590">
    <property type="entry name" value="BAR_Bin3"/>
    <property type="match status" value="1"/>
</dbReference>
<dbReference type="FunFam" id="1.20.1270.60:FF:000028">
    <property type="entry name" value="Bridging integrator 3 homolog"/>
    <property type="match status" value="1"/>
</dbReference>
<dbReference type="Gene3D" id="1.20.1270.60">
    <property type="entry name" value="Arfaptin homology (AH) domain/BAR domain"/>
    <property type="match status" value="1"/>
</dbReference>
<dbReference type="InterPro" id="IPR027267">
    <property type="entry name" value="AH/BAR_dom_sf"/>
</dbReference>
<dbReference type="InterPro" id="IPR004148">
    <property type="entry name" value="BAR_dom"/>
</dbReference>
<dbReference type="InterPro" id="IPR046982">
    <property type="entry name" value="BIN3/RVS161-like"/>
</dbReference>
<dbReference type="InterPro" id="IPR037428">
    <property type="entry name" value="Bin3_BAR"/>
</dbReference>
<dbReference type="PANTHER" id="PTHR47174">
    <property type="entry name" value="BRIDGING INTEGRATOR 3"/>
    <property type="match status" value="1"/>
</dbReference>
<dbReference type="PANTHER" id="PTHR47174:SF3">
    <property type="entry name" value="BRIDGING INTEGRATOR 3"/>
    <property type="match status" value="1"/>
</dbReference>
<dbReference type="Pfam" id="PF03114">
    <property type="entry name" value="BAR"/>
    <property type="match status" value="1"/>
</dbReference>
<dbReference type="SMART" id="SM00721">
    <property type="entry name" value="BAR"/>
    <property type="match status" value="1"/>
</dbReference>
<dbReference type="SUPFAM" id="SSF103657">
    <property type="entry name" value="BAR/IMD domain-like"/>
    <property type="match status" value="1"/>
</dbReference>
<dbReference type="PROSITE" id="PS51021">
    <property type="entry name" value="BAR"/>
    <property type="match status" value="1"/>
</dbReference>
<sequence length="253" mass="29665">MSWIPFKIGQPKKQIVPKTVERDFEREYGKLQQLEEQTRRLQKDMKKSTDADLAMSKSAVKISLDLLSNPLCEQDQDLLNMVTALDTAMKRMDAFNQEKVNQIQKTVIEPLKKFGSVFPSLNMAVKRREQALQDYRRLQAKVEKYEEKEKTGPVLAKLHQAREELRPVREDFEAKNRQLLEEMPRFYGSRLDYFQPSFESLIRAQVVYYSEMHKIFGDLSHQLDQPGHSDEQRERENEAKLSELRALSIVADD</sequence>
<comment type="function">
    <text>Involved in cytokinesis and septation where it has a role in the localization of F-actin.</text>
</comment>
<comment type="interaction">
    <interactant intactId="EBI-2653038">
        <id>Q9NQY0</id>
    </interactant>
    <interactant intactId="EBI-11096309">
        <id>Q9NYB9-2</id>
        <label>ABI2</label>
    </interactant>
    <organismsDiffer>false</organismsDiffer>
    <experiments>7</experiments>
</comment>
<comment type="interaction">
    <interactant intactId="EBI-2653038">
        <id>Q9NQY0</id>
    </interactant>
    <interactant intactId="EBI-725606">
        <id>Q9NWQ9</id>
        <label>C14orf119</label>
    </interactant>
    <organismsDiffer>false</organismsDiffer>
    <experiments>3</experiments>
</comment>
<comment type="interaction">
    <interactant intactId="EBI-2653038">
        <id>Q9NQY0</id>
    </interactant>
    <interactant intactId="EBI-2483419">
        <id>Q6XZF7</id>
        <label>DNMBP</label>
    </interactant>
    <organismsDiffer>false</organismsDiffer>
    <experiments>5</experiments>
</comment>
<comment type="interaction">
    <interactant intactId="EBI-2653038">
        <id>Q9NQY0</id>
    </interactant>
    <interactant intactId="EBI-747500">
        <id>Q9BRT9</id>
        <label>GINS4</label>
    </interactant>
    <organismsDiffer>false</organismsDiffer>
    <experiments>3</experiments>
</comment>
<comment type="interaction">
    <interactant intactId="EBI-2653038">
        <id>Q9NQY0</id>
    </interactant>
    <interactant intactId="EBI-398874">
        <id>Q9UBU9</id>
        <label>NXF1</label>
    </interactant>
    <organismsDiffer>false</organismsDiffer>
    <experiments>3</experiments>
</comment>
<comment type="interaction">
    <interactant intactId="EBI-2653038">
        <id>Q9NQY0</id>
    </interactant>
    <interactant intactId="EBI-1055079">
        <id>O15160</id>
        <label>POLR1C</label>
    </interactant>
    <organismsDiffer>false</organismsDiffer>
    <experiments>3</experiments>
</comment>
<comment type="interaction">
    <interactant intactId="EBI-2653038">
        <id>Q9NQY0</id>
    </interactant>
    <interactant intactId="EBI-747925">
        <id>Q9NQG5</id>
        <label>RPRD1B</label>
    </interactant>
    <organismsDiffer>false</organismsDiffer>
    <experiments>3</experiments>
</comment>
<comment type="interaction">
    <interactant intactId="EBI-2653038">
        <id>Q9NQY0</id>
    </interactant>
    <interactant intactId="EBI-11525489">
        <id>Q86WT6-2</id>
        <label>TRIM69</label>
    </interactant>
    <organismsDiffer>false</organismsDiffer>
    <experiments>3</experiments>
</comment>
<comment type="interaction">
    <interactant intactId="EBI-2653038">
        <id>Q9NQY0</id>
    </interactant>
    <interactant intactId="EBI-359793">
        <id>P40222</id>
        <label>TXLNA</label>
    </interactant>
    <organismsDiffer>false</organismsDiffer>
    <experiments>3</experiments>
</comment>
<comment type="interaction">
    <interactant intactId="EBI-2653038">
        <id>Q9NQY0</id>
    </interactant>
    <interactant intactId="EBI-607755">
        <id>Q9BZL1</id>
        <label>UBL5</label>
    </interactant>
    <organismsDiffer>false</organismsDiffer>
    <experiments>3</experiments>
</comment>
<comment type="subcellular location">
    <subcellularLocation>
        <location>Cytoplasm</location>
        <location>Cytoskeleton</location>
    </subcellularLocation>
</comment>
<comment type="alternative products">
    <event type="alternative splicing"/>
    <isoform>
        <id>Q9NQY0-1</id>
        <name>1</name>
        <sequence type="displayed"/>
    </isoform>
    <isoform>
        <id>Q9NQY0-2</id>
        <name>2</name>
        <sequence type="described" ref="VSP_013465"/>
    </isoform>
</comment>
<comment type="tissue specificity">
    <text evidence="4">Ubiquitously expressed except in brain.</text>
</comment>
<comment type="sequence caution" evidence="6">
    <conflict type="erroneous initiation">
        <sequence resource="EMBL-CDS" id="AAH01223"/>
    </conflict>
</comment>